<protein>
    <recommendedName>
        <fullName evidence="4">Protein TRACHEARY ELEMENT DIFFERENTIATION-RELATED 6</fullName>
    </recommendedName>
</protein>
<organism>
    <name type="scientific">Arabidopsis thaliana</name>
    <name type="common">Mouse-ear cress</name>
    <dbReference type="NCBI Taxonomy" id="3702"/>
    <lineage>
        <taxon>Eukaryota</taxon>
        <taxon>Viridiplantae</taxon>
        <taxon>Streptophyta</taxon>
        <taxon>Embryophyta</taxon>
        <taxon>Tracheophyta</taxon>
        <taxon>Spermatophyta</taxon>
        <taxon>Magnoliopsida</taxon>
        <taxon>eudicotyledons</taxon>
        <taxon>Gunneridae</taxon>
        <taxon>Pentapetalae</taxon>
        <taxon>rosids</taxon>
        <taxon>malvids</taxon>
        <taxon>Brassicales</taxon>
        <taxon>Brassicaceae</taxon>
        <taxon>Camelineae</taxon>
        <taxon>Arabidopsis</taxon>
    </lineage>
</organism>
<dbReference type="EMBL" id="AC006423">
    <property type="status" value="NOT_ANNOTATED_CDS"/>
    <property type="molecule type" value="Genomic_DNA"/>
</dbReference>
<dbReference type="EMBL" id="CP002684">
    <property type="protein sequence ID" value="AEE31997.1"/>
    <property type="molecule type" value="Genomic_DNA"/>
</dbReference>
<dbReference type="EMBL" id="BT024569">
    <property type="protein sequence ID" value="ABD38908.1"/>
    <property type="molecule type" value="mRNA"/>
</dbReference>
<dbReference type="EMBL" id="AY086934">
    <property type="protein sequence ID" value="AAM64498.1"/>
    <property type="molecule type" value="mRNA"/>
</dbReference>
<dbReference type="RefSeq" id="NP_564487.1">
    <property type="nucleotide sequence ID" value="NM_103507.2"/>
</dbReference>
<dbReference type="SMR" id="Q8LBX7"/>
<dbReference type="FunCoup" id="Q8LBX7">
    <property type="interactions" value="16"/>
</dbReference>
<dbReference type="IntAct" id="Q8LBX7">
    <property type="interactions" value="2"/>
</dbReference>
<dbReference type="STRING" id="3702.Q8LBX7"/>
<dbReference type="GlyGen" id="Q8LBX7">
    <property type="glycosylation" value="1 site"/>
</dbReference>
<dbReference type="PaxDb" id="3702-AT1G43790.1"/>
<dbReference type="ProteomicsDB" id="187091"/>
<dbReference type="EnsemblPlants" id="AT1G43790.1">
    <property type="protein sequence ID" value="AT1G43790.1"/>
    <property type="gene ID" value="AT1G43790"/>
</dbReference>
<dbReference type="GeneID" id="840976"/>
<dbReference type="Gramene" id="AT1G43790.1">
    <property type="protein sequence ID" value="AT1G43790.1"/>
    <property type="gene ID" value="AT1G43790"/>
</dbReference>
<dbReference type="KEGG" id="ath:AT1G43790"/>
<dbReference type="Araport" id="AT1G43790"/>
<dbReference type="TAIR" id="AT1G43790">
    <property type="gene designation" value="TED6"/>
</dbReference>
<dbReference type="eggNOG" id="ENOG502STV4">
    <property type="taxonomic scope" value="Eukaryota"/>
</dbReference>
<dbReference type="HOGENOM" id="CLU_2100240_0_0_1"/>
<dbReference type="InParanoid" id="Q8LBX7"/>
<dbReference type="OMA" id="KWECSAT"/>
<dbReference type="OrthoDB" id="785473at2759"/>
<dbReference type="PhylomeDB" id="Q8LBX7"/>
<dbReference type="PRO" id="PR:Q8LBX7"/>
<dbReference type="Proteomes" id="UP000006548">
    <property type="component" value="Chromosome 1"/>
</dbReference>
<dbReference type="ExpressionAtlas" id="Q8LBX7">
    <property type="expression patterns" value="baseline and differential"/>
</dbReference>
<dbReference type="GO" id="GO:0005576">
    <property type="term" value="C:extracellular region"/>
    <property type="evidence" value="ECO:0007669"/>
    <property type="project" value="UniProtKB-KW"/>
</dbReference>
<dbReference type="GO" id="GO:0009505">
    <property type="term" value="C:plant-type cell wall"/>
    <property type="evidence" value="ECO:0000250"/>
    <property type="project" value="UniProtKB"/>
</dbReference>
<dbReference type="GO" id="GO:0005886">
    <property type="term" value="C:plasma membrane"/>
    <property type="evidence" value="ECO:0000250"/>
    <property type="project" value="UniProtKB"/>
</dbReference>
<dbReference type="GO" id="GO:0044568">
    <property type="term" value="C:secondary cell wall cellulose synthase complex"/>
    <property type="evidence" value="ECO:0000314"/>
    <property type="project" value="UniProtKB"/>
</dbReference>
<dbReference type="GO" id="GO:0071555">
    <property type="term" value="P:cell wall organization"/>
    <property type="evidence" value="ECO:0007669"/>
    <property type="project" value="UniProtKB-KW"/>
</dbReference>
<dbReference type="GO" id="GO:0009834">
    <property type="term" value="P:plant-type secondary cell wall biogenesis"/>
    <property type="evidence" value="ECO:0000316"/>
    <property type="project" value="TAIR"/>
</dbReference>
<dbReference type="GO" id="GO:2000652">
    <property type="term" value="P:regulation of secondary cell wall biogenesis"/>
    <property type="evidence" value="ECO:0000315"/>
    <property type="project" value="UniProtKB"/>
</dbReference>
<dbReference type="GO" id="GO:1905177">
    <property type="term" value="P:tracheary element differentiation"/>
    <property type="evidence" value="ECO:0000315"/>
    <property type="project" value="UniProtKB"/>
</dbReference>
<dbReference type="InterPro" id="IPR044950">
    <property type="entry name" value="TED6/7"/>
</dbReference>
<dbReference type="PANTHER" id="PTHR35697">
    <property type="entry name" value="OS08G0108300 PROTEIN"/>
    <property type="match status" value="1"/>
</dbReference>
<dbReference type="PANTHER" id="PTHR35697:SF10">
    <property type="entry name" value="PROTEIN TRACHEARY ELEMENT DIFFERENTIATION-RELATED 6"/>
    <property type="match status" value="1"/>
</dbReference>
<sequence>MASTDSVYRPTPTPDHDTTVVVVVFVSLGCVMFLAFLAFVIWFLIKKRSRKHRERSEAVRVDEHFKMKEAIVEGPNGQKSVVLSVEDDVKIEDAIKREEKDLKKDGGVGSSVVSRS</sequence>
<name>TED6_ARATH</name>
<feature type="chain" id="PRO_0000448736" description="Protein TRACHEARY ELEMENT DIFFERENTIATION-RELATED 6">
    <location>
        <begin position="1"/>
        <end position="116"/>
    </location>
</feature>
<feature type="topological domain" description="Extracellular" evidence="5">
    <location>
        <begin position="1"/>
        <end position="24"/>
    </location>
</feature>
<feature type="transmembrane region" description="Helical" evidence="2">
    <location>
        <begin position="25"/>
        <end position="45"/>
    </location>
</feature>
<feature type="topological domain" description="Cytoplasmic" evidence="5">
    <location>
        <begin position="46"/>
        <end position="116"/>
    </location>
</feature>
<comment type="function">
    <text evidence="3">Involved in the secondary cell wall (SCW) formation of vessel elements (e.g. protoxylem and metaxylem), thus promoting tracheary element (TE) differentiation.</text>
</comment>
<comment type="subunit">
    <text evidence="3">Interacts with CESA7/IRX3, a subunit of the secondary cell wall (SCW)-related cellulose synthase complex.</text>
</comment>
<comment type="subcellular location">
    <subcellularLocation>
        <location evidence="1">Cell membrane</location>
        <topology evidence="2">Single-pass membrane protein</topology>
    </subcellularLocation>
    <subcellularLocation>
        <location evidence="1">Secreted</location>
        <location evidence="1">Cell wall</location>
    </subcellularLocation>
</comment>
<comment type="tissue specificity">
    <text evidence="3">Expressed preferentially in differentiating vessel elements in seedlings.</text>
</comment>
<comment type="developmental stage">
    <text evidence="3">Restricted to differentiating vessel elements of protoxylem and metaxylem.</text>
</comment>
<comment type="disruption phenotype">
    <text evidence="3">Conditional double mutant plants lacking both TED6 and TED7 have aberrant secondary cell wall (SCW) formation of root vessel elements.</text>
</comment>
<gene>
    <name evidence="4" type="primary">TED6</name>
    <name evidence="6" type="ordered locus">At1g43790</name>
    <name evidence="7" type="ORF">F28H19.19</name>
</gene>
<accession>Q8LBX7</accession>
<evidence type="ECO:0000250" key="1">
    <source>
        <dbReference type="UniProtKB" id="C1PGW0"/>
    </source>
</evidence>
<evidence type="ECO:0000255" key="2"/>
<evidence type="ECO:0000269" key="3">
    <source>
    </source>
</evidence>
<evidence type="ECO:0000303" key="4">
    <source>
    </source>
</evidence>
<evidence type="ECO:0000305" key="5"/>
<evidence type="ECO:0000312" key="6">
    <source>
        <dbReference type="Araport" id="AT1G43790"/>
    </source>
</evidence>
<evidence type="ECO:0000312" key="7">
    <source>
        <dbReference type="EMBL" id="AC006423"/>
    </source>
</evidence>
<proteinExistence type="evidence at protein level"/>
<reference key="1">
    <citation type="journal article" date="2000" name="Nature">
        <title>Sequence and analysis of chromosome 1 of the plant Arabidopsis thaliana.</title>
        <authorList>
            <person name="Theologis A."/>
            <person name="Ecker J.R."/>
            <person name="Palm C.J."/>
            <person name="Federspiel N.A."/>
            <person name="Kaul S."/>
            <person name="White O."/>
            <person name="Alonso J."/>
            <person name="Altafi H."/>
            <person name="Araujo R."/>
            <person name="Bowman C.L."/>
            <person name="Brooks S.Y."/>
            <person name="Buehler E."/>
            <person name="Chan A."/>
            <person name="Chao Q."/>
            <person name="Chen H."/>
            <person name="Cheuk R.F."/>
            <person name="Chin C.W."/>
            <person name="Chung M.K."/>
            <person name="Conn L."/>
            <person name="Conway A.B."/>
            <person name="Conway A.R."/>
            <person name="Creasy T.H."/>
            <person name="Dewar K."/>
            <person name="Dunn P."/>
            <person name="Etgu P."/>
            <person name="Feldblyum T.V."/>
            <person name="Feng J.-D."/>
            <person name="Fong B."/>
            <person name="Fujii C.Y."/>
            <person name="Gill J.E."/>
            <person name="Goldsmith A.D."/>
            <person name="Haas B."/>
            <person name="Hansen N.F."/>
            <person name="Hughes B."/>
            <person name="Huizar L."/>
            <person name="Hunter J.L."/>
            <person name="Jenkins J."/>
            <person name="Johnson-Hopson C."/>
            <person name="Khan S."/>
            <person name="Khaykin E."/>
            <person name="Kim C.J."/>
            <person name="Koo H.L."/>
            <person name="Kremenetskaia I."/>
            <person name="Kurtz D.B."/>
            <person name="Kwan A."/>
            <person name="Lam B."/>
            <person name="Langin-Hooper S."/>
            <person name="Lee A."/>
            <person name="Lee J.M."/>
            <person name="Lenz C.A."/>
            <person name="Li J.H."/>
            <person name="Li Y.-P."/>
            <person name="Lin X."/>
            <person name="Liu S.X."/>
            <person name="Liu Z.A."/>
            <person name="Luros J.S."/>
            <person name="Maiti R."/>
            <person name="Marziali A."/>
            <person name="Militscher J."/>
            <person name="Miranda M."/>
            <person name="Nguyen M."/>
            <person name="Nierman W.C."/>
            <person name="Osborne B.I."/>
            <person name="Pai G."/>
            <person name="Peterson J."/>
            <person name="Pham P.K."/>
            <person name="Rizzo M."/>
            <person name="Rooney T."/>
            <person name="Rowley D."/>
            <person name="Sakano H."/>
            <person name="Salzberg S.L."/>
            <person name="Schwartz J.R."/>
            <person name="Shinn P."/>
            <person name="Southwick A.M."/>
            <person name="Sun H."/>
            <person name="Tallon L.J."/>
            <person name="Tambunga G."/>
            <person name="Toriumi M.J."/>
            <person name="Town C.D."/>
            <person name="Utterback T."/>
            <person name="Van Aken S."/>
            <person name="Vaysberg M."/>
            <person name="Vysotskaia V.S."/>
            <person name="Walker M."/>
            <person name="Wu D."/>
            <person name="Yu G."/>
            <person name="Fraser C.M."/>
            <person name="Venter J.C."/>
            <person name="Davis R.W."/>
        </authorList>
    </citation>
    <scope>NUCLEOTIDE SEQUENCE [LARGE SCALE GENOMIC DNA]</scope>
    <source>
        <strain>cv. Columbia</strain>
    </source>
</reference>
<reference key="2">
    <citation type="journal article" date="2017" name="Plant J.">
        <title>Araport11: a complete reannotation of the Arabidopsis thaliana reference genome.</title>
        <authorList>
            <person name="Cheng C.Y."/>
            <person name="Krishnakumar V."/>
            <person name="Chan A.P."/>
            <person name="Thibaud-Nissen F."/>
            <person name="Schobel S."/>
            <person name="Town C.D."/>
        </authorList>
    </citation>
    <scope>GENOME REANNOTATION</scope>
    <source>
        <strain>cv. Columbia</strain>
    </source>
</reference>
<reference key="3">
    <citation type="submission" date="2006-02" db="EMBL/GenBank/DDBJ databases">
        <title>Arabidopsis ORF clones.</title>
        <authorList>
            <person name="Shinn P."/>
            <person name="Chen H."/>
            <person name="Kim C.J."/>
            <person name="Ecker J.R."/>
        </authorList>
    </citation>
    <scope>NUCLEOTIDE SEQUENCE [LARGE SCALE MRNA]</scope>
    <source>
        <strain>cv. Columbia</strain>
    </source>
</reference>
<reference key="4">
    <citation type="submission" date="2002-03" db="EMBL/GenBank/DDBJ databases">
        <title>Full-length cDNA from Arabidopsis thaliana.</title>
        <authorList>
            <person name="Brover V.V."/>
            <person name="Troukhan M.E."/>
            <person name="Alexandrov N.A."/>
            <person name="Lu Y.-P."/>
            <person name="Flavell R.B."/>
            <person name="Feldmann K.A."/>
        </authorList>
    </citation>
    <scope>NUCLEOTIDE SEQUENCE [LARGE SCALE MRNA]</scope>
</reference>
<reference key="5">
    <citation type="journal article" date="2009" name="Plant Cell">
        <title>Identifying new components participating in the secondary cell wall formation of vessel elements in zinnia and Arabidopsis.</title>
        <authorList>
            <person name="Endo S."/>
            <person name="Pesquet E."/>
            <person name="Yamaguchi M."/>
            <person name="Tashiro G."/>
            <person name="Sato M."/>
            <person name="Toyooka K."/>
            <person name="Nishikubo N."/>
            <person name="Udagawa-Motose M."/>
            <person name="Kubo M."/>
            <person name="Fukuda H."/>
            <person name="Demura T."/>
        </authorList>
    </citation>
    <scope>FUNCTION</scope>
    <scope>DISRUPTION PHENOTYPE</scope>
    <scope>TISSUE SPECIFICITY</scope>
    <scope>INTERACTION WITH CESA7/IRX3</scope>
    <scope>DEVELOPMENTAL STAGE</scope>
</reference>
<keyword id="KW-1003">Cell membrane</keyword>
<keyword id="KW-0134">Cell wall</keyword>
<keyword id="KW-0961">Cell wall biogenesis/degradation</keyword>
<keyword id="KW-0217">Developmental protein</keyword>
<keyword id="KW-0472">Membrane</keyword>
<keyword id="KW-1185">Reference proteome</keyword>
<keyword id="KW-0964">Secreted</keyword>
<keyword id="KW-0812">Transmembrane</keyword>
<keyword id="KW-1133">Transmembrane helix</keyword>